<organism>
    <name type="scientific">Bartonella tribocorum (strain CIP 105476 / IBS 506)</name>
    <dbReference type="NCBI Taxonomy" id="382640"/>
    <lineage>
        <taxon>Bacteria</taxon>
        <taxon>Pseudomonadati</taxon>
        <taxon>Pseudomonadota</taxon>
        <taxon>Alphaproteobacteria</taxon>
        <taxon>Hyphomicrobiales</taxon>
        <taxon>Bartonellaceae</taxon>
        <taxon>Bartonella</taxon>
    </lineage>
</organism>
<evidence type="ECO:0000255" key="1">
    <source>
        <dbReference type="HAMAP-Rule" id="MF_00182"/>
    </source>
</evidence>
<protein>
    <recommendedName>
        <fullName evidence="1">Methionyl-tRNA formyltransferase</fullName>
        <ecNumber evidence="1">2.1.2.9</ecNumber>
    </recommendedName>
</protein>
<keyword id="KW-0648">Protein biosynthesis</keyword>
<keyword id="KW-0808">Transferase</keyword>
<accession>A9ILK1</accession>
<reference key="1">
    <citation type="journal article" date="2007" name="Nat. Genet.">
        <title>Genomic analysis of Bartonella identifies type IV secretion systems as host adaptability factors.</title>
        <authorList>
            <person name="Saenz H.L."/>
            <person name="Engel P."/>
            <person name="Stoeckli M.C."/>
            <person name="Lanz C."/>
            <person name="Raddatz G."/>
            <person name="Vayssier-Taussat M."/>
            <person name="Birtles R."/>
            <person name="Schuster S.C."/>
            <person name="Dehio C."/>
        </authorList>
    </citation>
    <scope>NUCLEOTIDE SEQUENCE [LARGE SCALE GENOMIC DNA]</scope>
    <source>
        <strain>CIP 105476 / IBS 506</strain>
    </source>
</reference>
<gene>
    <name evidence="1" type="primary">fmt</name>
    <name type="ordered locus">BT_0078</name>
</gene>
<feature type="chain" id="PRO_1000077288" description="Methionyl-tRNA formyltransferase">
    <location>
        <begin position="1"/>
        <end position="309"/>
    </location>
</feature>
<feature type="binding site" evidence="1">
    <location>
        <begin position="112"/>
        <end position="115"/>
    </location>
    <ligand>
        <name>(6S)-5,6,7,8-tetrahydrofolate</name>
        <dbReference type="ChEBI" id="CHEBI:57453"/>
    </ligand>
</feature>
<proteinExistence type="inferred from homology"/>
<comment type="function">
    <text evidence="1">Attaches a formyl group to the free amino group of methionyl-tRNA(fMet). The formyl group appears to play a dual role in the initiator identity of N-formylmethionyl-tRNA by promoting its recognition by IF2 and preventing the misappropriation of this tRNA by the elongation apparatus.</text>
</comment>
<comment type="catalytic activity">
    <reaction evidence="1">
        <text>L-methionyl-tRNA(fMet) + (6R)-10-formyltetrahydrofolate = N-formyl-L-methionyl-tRNA(fMet) + (6S)-5,6,7,8-tetrahydrofolate + H(+)</text>
        <dbReference type="Rhea" id="RHEA:24380"/>
        <dbReference type="Rhea" id="RHEA-COMP:9952"/>
        <dbReference type="Rhea" id="RHEA-COMP:9953"/>
        <dbReference type="ChEBI" id="CHEBI:15378"/>
        <dbReference type="ChEBI" id="CHEBI:57453"/>
        <dbReference type="ChEBI" id="CHEBI:78530"/>
        <dbReference type="ChEBI" id="CHEBI:78844"/>
        <dbReference type="ChEBI" id="CHEBI:195366"/>
        <dbReference type="EC" id="2.1.2.9"/>
    </reaction>
</comment>
<comment type="similarity">
    <text evidence="1">Belongs to the Fmt family.</text>
</comment>
<name>FMT_BART1</name>
<sequence length="309" mass="33789">MALRLSFMGTPDFSVPILHALLDAGHDVVAVYSQPPRPAGRRRLKLIPSPVQNAAEERSIPTFTPQTLKTAEQQAQFAALSVDAAIVVAYGLLLPKAILETPRFGCFNAHASLLPRWRGAAPIQRAIMAGDKETGMMIMKMDEGLDTGSIVLSRSIPITDTTTTDKLSNELSYIGAELMIETLSTLEKGQLKLIPQSKEGITYAAKIKKEETRIDWKKPAEFIHRHIRALSPSPGCWCNMNIGGREERVKILESRLATGTSLEIGRIEPNSLIVHCGQGRIEITTLQRSGGKILDSATFLRGAHISAVF</sequence>
<dbReference type="EC" id="2.1.2.9" evidence="1"/>
<dbReference type="EMBL" id="AM260525">
    <property type="protein sequence ID" value="CAK00574.1"/>
    <property type="molecule type" value="Genomic_DNA"/>
</dbReference>
<dbReference type="RefSeq" id="WP_012230390.1">
    <property type="nucleotide sequence ID" value="NC_010161.1"/>
</dbReference>
<dbReference type="SMR" id="A9ILK1"/>
<dbReference type="KEGG" id="btr:BT_0078"/>
<dbReference type="eggNOG" id="COG0223">
    <property type="taxonomic scope" value="Bacteria"/>
</dbReference>
<dbReference type="HOGENOM" id="CLU_033347_1_2_5"/>
<dbReference type="Proteomes" id="UP000001592">
    <property type="component" value="Chromosome"/>
</dbReference>
<dbReference type="GO" id="GO:0005829">
    <property type="term" value="C:cytosol"/>
    <property type="evidence" value="ECO:0007669"/>
    <property type="project" value="TreeGrafter"/>
</dbReference>
<dbReference type="GO" id="GO:0004479">
    <property type="term" value="F:methionyl-tRNA formyltransferase activity"/>
    <property type="evidence" value="ECO:0007669"/>
    <property type="project" value="UniProtKB-UniRule"/>
</dbReference>
<dbReference type="CDD" id="cd08646">
    <property type="entry name" value="FMT_core_Met-tRNA-FMT_N"/>
    <property type="match status" value="1"/>
</dbReference>
<dbReference type="CDD" id="cd08704">
    <property type="entry name" value="Met_tRNA_FMT_C"/>
    <property type="match status" value="1"/>
</dbReference>
<dbReference type="FunFam" id="3.40.50.12230:FF:000001">
    <property type="entry name" value="Methionyl-tRNA formyltransferase"/>
    <property type="match status" value="1"/>
</dbReference>
<dbReference type="Gene3D" id="3.40.50.12230">
    <property type="match status" value="1"/>
</dbReference>
<dbReference type="HAMAP" id="MF_00182">
    <property type="entry name" value="Formyl_trans"/>
    <property type="match status" value="1"/>
</dbReference>
<dbReference type="InterPro" id="IPR005794">
    <property type="entry name" value="Fmt"/>
</dbReference>
<dbReference type="InterPro" id="IPR005793">
    <property type="entry name" value="Formyl_trans_C"/>
</dbReference>
<dbReference type="InterPro" id="IPR002376">
    <property type="entry name" value="Formyl_transf_N"/>
</dbReference>
<dbReference type="InterPro" id="IPR036477">
    <property type="entry name" value="Formyl_transf_N_sf"/>
</dbReference>
<dbReference type="InterPro" id="IPR011034">
    <property type="entry name" value="Formyl_transferase-like_C_sf"/>
</dbReference>
<dbReference type="InterPro" id="IPR001555">
    <property type="entry name" value="GART_AS"/>
</dbReference>
<dbReference type="InterPro" id="IPR044135">
    <property type="entry name" value="Met-tRNA-FMT_C"/>
</dbReference>
<dbReference type="InterPro" id="IPR041711">
    <property type="entry name" value="Met-tRNA-FMT_N"/>
</dbReference>
<dbReference type="NCBIfam" id="TIGR00460">
    <property type="entry name" value="fmt"/>
    <property type="match status" value="1"/>
</dbReference>
<dbReference type="PANTHER" id="PTHR11138">
    <property type="entry name" value="METHIONYL-TRNA FORMYLTRANSFERASE"/>
    <property type="match status" value="1"/>
</dbReference>
<dbReference type="PANTHER" id="PTHR11138:SF5">
    <property type="entry name" value="METHIONYL-TRNA FORMYLTRANSFERASE, MITOCHONDRIAL"/>
    <property type="match status" value="1"/>
</dbReference>
<dbReference type="Pfam" id="PF02911">
    <property type="entry name" value="Formyl_trans_C"/>
    <property type="match status" value="1"/>
</dbReference>
<dbReference type="Pfam" id="PF00551">
    <property type="entry name" value="Formyl_trans_N"/>
    <property type="match status" value="1"/>
</dbReference>
<dbReference type="SUPFAM" id="SSF50486">
    <property type="entry name" value="FMT C-terminal domain-like"/>
    <property type="match status" value="1"/>
</dbReference>
<dbReference type="SUPFAM" id="SSF53328">
    <property type="entry name" value="Formyltransferase"/>
    <property type="match status" value="1"/>
</dbReference>
<dbReference type="PROSITE" id="PS00373">
    <property type="entry name" value="GART"/>
    <property type="match status" value="1"/>
</dbReference>